<reference key="1">
    <citation type="submission" date="2007-07" db="EMBL/GenBank/DDBJ databases">
        <title>Complete genome sequence of Campylobacter jejuni subsp doylei 269.97 isolated from human blood.</title>
        <authorList>
            <person name="Fouts D.E."/>
            <person name="Mongodin E.F."/>
            <person name="Puiu D."/>
            <person name="Sebastian Y."/>
            <person name="Miller W.G."/>
            <person name="Mandrell R.E."/>
            <person name="Lastovica A.J."/>
            <person name="Nelson K.E."/>
        </authorList>
    </citation>
    <scope>NUCLEOTIDE SEQUENCE [LARGE SCALE GENOMIC DNA]</scope>
    <source>
        <strain>ATCC BAA-1458 / RM4099 / 269.97</strain>
    </source>
</reference>
<proteinExistence type="inferred from homology"/>
<evidence type="ECO:0000255" key="1">
    <source>
        <dbReference type="HAMAP-Rule" id="MF_00122"/>
    </source>
</evidence>
<keyword id="KW-0067">ATP-binding</keyword>
<keyword id="KW-0436">Ligase</keyword>
<keyword id="KW-0547">Nucleotide-binding</keyword>
<keyword id="KW-0648">Protein biosynthesis</keyword>
<comment type="function">
    <text evidence="1">Allows the formation of correctly charged Asn-tRNA(Asn) or Gln-tRNA(Gln) through the transamidation of misacylated Asp-tRNA(Asn) or Glu-tRNA(Gln) in organisms which lack either or both of asparaginyl-tRNA or glutaminyl-tRNA synthetases. The reaction takes place in the presence of glutamine and ATP through an activated phospho-Asp-tRNA(Asn) or phospho-Glu-tRNA(Gln).</text>
</comment>
<comment type="catalytic activity">
    <reaction evidence="1">
        <text>L-glutamyl-tRNA(Gln) + L-glutamine + ATP + H2O = L-glutaminyl-tRNA(Gln) + L-glutamate + ADP + phosphate + H(+)</text>
        <dbReference type="Rhea" id="RHEA:17521"/>
        <dbReference type="Rhea" id="RHEA-COMP:9681"/>
        <dbReference type="Rhea" id="RHEA-COMP:9684"/>
        <dbReference type="ChEBI" id="CHEBI:15377"/>
        <dbReference type="ChEBI" id="CHEBI:15378"/>
        <dbReference type="ChEBI" id="CHEBI:29985"/>
        <dbReference type="ChEBI" id="CHEBI:30616"/>
        <dbReference type="ChEBI" id="CHEBI:43474"/>
        <dbReference type="ChEBI" id="CHEBI:58359"/>
        <dbReference type="ChEBI" id="CHEBI:78520"/>
        <dbReference type="ChEBI" id="CHEBI:78521"/>
        <dbReference type="ChEBI" id="CHEBI:456216"/>
    </reaction>
</comment>
<comment type="catalytic activity">
    <reaction evidence="1">
        <text>L-aspartyl-tRNA(Asn) + L-glutamine + ATP + H2O = L-asparaginyl-tRNA(Asn) + L-glutamate + ADP + phosphate + 2 H(+)</text>
        <dbReference type="Rhea" id="RHEA:14513"/>
        <dbReference type="Rhea" id="RHEA-COMP:9674"/>
        <dbReference type="Rhea" id="RHEA-COMP:9677"/>
        <dbReference type="ChEBI" id="CHEBI:15377"/>
        <dbReference type="ChEBI" id="CHEBI:15378"/>
        <dbReference type="ChEBI" id="CHEBI:29985"/>
        <dbReference type="ChEBI" id="CHEBI:30616"/>
        <dbReference type="ChEBI" id="CHEBI:43474"/>
        <dbReference type="ChEBI" id="CHEBI:58359"/>
        <dbReference type="ChEBI" id="CHEBI:78515"/>
        <dbReference type="ChEBI" id="CHEBI:78516"/>
        <dbReference type="ChEBI" id="CHEBI:456216"/>
    </reaction>
</comment>
<comment type="subunit">
    <text evidence="1">Heterotrimer of A, B and C subunits.</text>
</comment>
<comment type="similarity">
    <text evidence="1">Belongs to the GatC family.</text>
</comment>
<feature type="chain" id="PRO_1000016100" description="Aspartyl/glutamyl-tRNA(Asn/Gln) amidotransferase subunit C">
    <location>
        <begin position="1"/>
        <end position="94"/>
    </location>
</feature>
<protein>
    <recommendedName>
        <fullName evidence="1">Aspartyl/glutamyl-tRNA(Asn/Gln) amidotransferase subunit C</fullName>
        <shortName evidence="1">Asp/Glu-ADT subunit C</shortName>
        <ecNumber evidence="1">6.3.5.-</ecNumber>
    </recommendedName>
</protein>
<organism>
    <name type="scientific">Campylobacter jejuni subsp. doylei (strain ATCC BAA-1458 / RM4099 / 269.97)</name>
    <dbReference type="NCBI Taxonomy" id="360109"/>
    <lineage>
        <taxon>Bacteria</taxon>
        <taxon>Pseudomonadati</taxon>
        <taxon>Campylobacterota</taxon>
        <taxon>Epsilonproteobacteria</taxon>
        <taxon>Campylobacterales</taxon>
        <taxon>Campylobacteraceae</taxon>
        <taxon>Campylobacter</taxon>
    </lineage>
</organism>
<accession>A7H4Y0</accession>
<sequence length="94" mass="10702">MQIDEKLLSKLEKLSALQITKNRNETIAQLSEIVNFVKKLNELDLDSQEITVSTIKGGAPLRIDEIRNSNVIDEVLDCAPKKQEHFFIVPKIIE</sequence>
<dbReference type="EC" id="6.3.5.-" evidence="1"/>
<dbReference type="EMBL" id="CP000768">
    <property type="protein sequence ID" value="ABS44432.1"/>
    <property type="molecule type" value="Genomic_DNA"/>
</dbReference>
<dbReference type="SMR" id="A7H4Y0"/>
<dbReference type="KEGG" id="cjd:JJD26997_1559"/>
<dbReference type="HOGENOM" id="CLU_105899_2_1_7"/>
<dbReference type="Proteomes" id="UP000002302">
    <property type="component" value="Chromosome"/>
</dbReference>
<dbReference type="GO" id="GO:0050566">
    <property type="term" value="F:asparaginyl-tRNA synthase (glutamine-hydrolyzing) activity"/>
    <property type="evidence" value="ECO:0007669"/>
    <property type="project" value="RHEA"/>
</dbReference>
<dbReference type="GO" id="GO:0005524">
    <property type="term" value="F:ATP binding"/>
    <property type="evidence" value="ECO:0007669"/>
    <property type="project" value="UniProtKB-KW"/>
</dbReference>
<dbReference type="GO" id="GO:0050567">
    <property type="term" value="F:glutaminyl-tRNA synthase (glutamine-hydrolyzing) activity"/>
    <property type="evidence" value="ECO:0007669"/>
    <property type="project" value="UniProtKB-UniRule"/>
</dbReference>
<dbReference type="GO" id="GO:0070681">
    <property type="term" value="P:glutaminyl-tRNAGln biosynthesis via transamidation"/>
    <property type="evidence" value="ECO:0007669"/>
    <property type="project" value="TreeGrafter"/>
</dbReference>
<dbReference type="GO" id="GO:0006450">
    <property type="term" value="P:regulation of translational fidelity"/>
    <property type="evidence" value="ECO:0007669"/>
    <property type="project" value="InterPro"/>
</dbReference>
<dbReference type="GO" id="GO:0006412">
    <property type="term" value="P:translation"/>
    <property type="evidence" value="ECO:0007669"/>
    <property type="project" value="UniProtKB-UniRule"/>
</dbReference>
<dbReference type="Gene3D" id="1.10.20.60">
    <property type="entry name" value="Glu-tRNAGln amidotransferase C subunit, N-terminal domain"/>
    <property type="match status" value="1"/>
</dbReference>
<dbReference type="HAMAP" id="MF_00122">
    <property type="entry name" value="GatC"/>
    <property type="match status" value="1"/>
</dbReference>
<dbReference type="InterPro" id="IPR036113">
    <property type="entry name" value="Asp/Glu-ADT_sf_sub_c"/>
</dbReference>
<dbReference type="InterPro" id="IPR003837">
    <property type="entry name" value="GatC"/>
</dbReference>
<dbReference type="NCBIfam" id="TIGR00135">
    <property type="entry name" value="gatC"/>
    <property type="match status" value="1"/>
</dbReference>
<dbReference type="PANTHER" id="PTHR15004">
    <property type="entry name" value="GLUTAMYL-TRNA(GLN) AMIDOTRANSFERASE SUBUNIT C, MITOCHONDRIAL"/>
    <property type="match status" value="1"/>
</dbReference>
<dbReference type="PANTHER" id="PTHR15004:SF0">
    <property type="entry name" value="GLUTAMYL-TRNA(GLN) AMIDOTRANSFERASE SUBUNIT C, MITOCHONDRIAL"/>
    <property type="match status" value="1"/>
</dbReference>
<dbReference type="Pfam" id="PF02686">
    <property type="entry name" value="GatC"/>
    <property type="match status" value="1"/>
</dbReference>
<dbReference type="SUPFAM" id="SSF141000">
    <property type="entry name" value="Glu-tRNAGln amidotransferase C subunit"/>
    <property type="match status" value="1"/>
</dbReference>
<name>GATC_CAMJD</name>
<gene>
    <name evidence="1" type="primary">gatC</name>
    <name type="ordered locus">JJD26997_1559</name>
</gene>